<proteinExistence type="inferred from homology"/>
<accession>A5FXJ1</accession>
<sequence length="102" mass="10638">MATVPLGQGLLLAAILFALGLVGVLVRRNLLFMLMSLEVMLNAAGVAFIVAGARWASPDGQIMFILVLTLAAAEVSVGLALILLMHRRIPTLDADAGDGLRG</sequence>
<protein>
    <recommendedName>
        <fullName evidence="1">NADH-quinone oxidoreductase subunit K</fullName>
        <ecNumber evidence="1">7.1.1.-</ecNumber>
    </recommendedName>
    <alternativeName>
        <fullName evidence="1">NADH dehydrogenase I subunit K</fullName>
    </alternativeName>
    <alternativeName>
        <fullName evidence="1">NDH-1 subunit K</fullName>
    </alternativeName>
</protein>
<comment type="function">
    <text evidence="1">NDH-1 shuttles electrons from NADH, via FMN and iron-sulfur (Fe-S) centers, to quinones in the respiratory chain. The immediate electron acceptor for the enzyme in this species is believed to be ubiquinone. Couples the redox reaction to proton translocation (for every two electrons transferred, four hydrogen ions are translocated across the cytoplasmic membrane), and thus conserves the redox energy in a proton gradient.</text>
</comment>
<comment type="catalytic activity">
    <reaction evidence="1">
        <text>a quinone + NADH + 5 H(+)(in) = a quinol + NAD(+) + 4 H(+)(out)</text>
        <dbReference type="Rhea" id="RHEA:57888"/>
        <dbReference type="ChEBI" id="CHEBI:15378"/>
        <dbReference type="ChEBI" id="CHEBI:24646"/>
        <dbReference type="ChEBI" id="CHEBI:57540"/>
        <dbReference type="ChEBI" id="CHEBI:57945"/>
        <dbReference type="ChEBI" id="CHEBI:132124"/>
    </reaction>
</comment>
<comment type="subunit">
    <text evidence="1">NDH-1 is composed of 14 different subunits. Subunits NuoA, H, J, K, L, M, N constitute the membrane sector of the complex.</text>
</comment>
<comment type="subcellular location">
    <subcellularLocation>
        <location evidence="1">Cell inner membrane</location>
        <topology evidence="1">Multi-pass membrane protein</topology>
    </subcellularLocation>
</comment>
<comment type="similarity">
    <text evidence="1">Belongs to the complex I subunit 4L family.</text>
</comment>
<dbReference type="EC" id="7.1.1.-" evidence="1"/>
<dbReference type="EMBL" id="CP000697">
    <property type="protein sequence ID" value="ABQ30323.1"/>
    <property type="molecule type" value="Genomic_DNA"/>
</dbReference>
<dbReference type="RefSeq" id="WP_011941997.1">
    <property type="nucleotide sequence ID" value="NC_009484.1"/>
</dbReference>
<dbReference type="SMR" id="A5FXJ1"/>
<dbReference type="STRING" id="349163.Acry_1111"/>
<dbReference type="KEGG" id="acr:Acry_1111"/>
<dbReference type="eggNOG" id="COG0713">
    <property type="taxonomic scope" value="Bacteria"/>
</dbReference>
<dbReference type="HOGENOM" id="CLU_144724_0_1_5"/>
<dbReference type="Proteomes" id="UP000000245">
    <property type="component" value="Chromosome"/>
</dbReference>
<dbReference type="GO" id="GO:0030964">
    <property type="term" value="C:NADH dehydrogenase complex"/>
    <property type="evidence" value="ECO:0007669"/>
    <property type="project" value="TreeGrafter"/>
</dbReference>
<dbReference type="GO" id="GO:0005886">
    <property type="term" value="C:plasma membrane"/>
    <property type="evidence" value="ECO:0007669"/>
    <property type="project" value="UniProtKB-SubCell"/>
</dbReference>
<dbReference type="GO" id="GO:0050136">
    <property type="term" value="F:NADH:ubiquinone reductase (non-electrogenic) activity"/>
    <property type="evidence" value="ECO:0007669"/>
    <property type="project" value="UniProtKB-UniRule"/>
</dbReference>
<dbReference type="GO" id="GO:0048038">
    <property type="term" value="F:quinone binding"/>
    <property type="evidence" value="ECO:0007669"/>
    <property type="project" value="UniProtKB-KW"/>
</dbReference>
<dbReference type="GO" id="GO:0042773">
    <property type="term" value="P:ATP synthesis coupled electron transport"/>
    <property type="evidence" value="ECO:0007669"/>
    <property type="project" value="InterPro"/>
</dbReference>
<dbReference type="FunFam" id="1.10.287.3510:FF:000001">
    <property type="entry name" value="NADH-quinone oxidoreductase subunit K"/>
    <property type="match status" value="1"/>
</dbReference>
<dbReference type="Gene3D" id="1.10.287.3510">
    <property type="match status" value="1"/>
</dbReference>
<dbReference type="HAMAP" id="MF_01456">
    <property type="entry name" value="NDH1_NuoK"/>
    <property type="match status" value="1"/>
</dbReference>
<dbReference type="InterPro" id="IPR001133">
    <property type="entry name" value="NADH_UbQ_OxRdtase_chain4L/K"/>
</dbReference>
<dbReference type="InterPro" id="IPR039428">
    <property type="entry name" value="NUOK/Mnh_C1-like"/>
</dbReference>
<dbReference type="NCBIfam" id="NF004319">
    <property type="entry name" value="PRK05715.1-1"/>
    <property type="match status" value="1"/>
</dbReference>
<dbReference type="NCBIfam" id="NF004320">
    <property type="entry name" value="PRK05715.1-2"/>
    <property type="match status" value="1"/>
</dbReference>
<dbReference type="PANTHER" id="PTHR11434:SF16">
    <property type="entry name" value="NADH-UBIQUINONE OXIDOREDUCTASE CHAIN 4L"/>
    <property type="match status" value="1"/>
</dbReference>
<dbReference type="PANTHER" id="PTHR11434">
    <property type="entry name" value="NADH-UBIQUINONE OXIDOREDUCTASE SUBUNIT ND4L"/>
    <property type="match status" value="1"/>
</dbReference>
<dbReference type="Pfam" id="PF00420">
    <property type="entry name" value="Oxidored_q2"/>
    <property type="match status" value="1"/>
</dbReference>
<keyword id="KW-0997">Cell inner membrane</keyword>
<keyword id="KW-1003">Cell membrane</keyword>
<keyword id="KW-0472">Membrane</keyword>
<keyword id="KW-0520">NAD</keyword>
<keyword id="KW-0874">Quinone</keyword>
<keyword id="KW-1185">Reference proteome</keyword>
<keyword id="KW-1278">Translocase</keyword>
<keyword id="KW-0812">Transmembrane</keyword>
<keyword id="KW-1133">Transmembrane helix</keyword>
<keyword id="KW-0813">Transport</keyword>
<keyword id="KW-0830">Ubiquinone</keyword>
<reference key="1">
    <citation type="submission" date="2007-05" db="EMBL/GenBank/DDBJ databases">
        <title>Complete sequence of chromosome of Acidiphilium cryptum JF-5.</title>
        <authorList>
            <consortium name="US DOE Joint Genome Institute"/>
            <person name="Copeland A."/>
            <person name="Lucas S."/>
            <person name="Lapidus A."/>
            <person name="Barry K."/>
            <person name="Detter J.C."/>
            <person name="Glavina del Rio T."/>
            <person name="Hammon N."/>
            <person name="Israni S."/>
            <person name="Dalin E."/>
            <person name="Tice H."/>
            <person name="Pitluck S."/>
            <person name="Sims D."/>
            <person name="Brettin T."/>
            <person name="Bruce D."/>
            <person name="Han C."/>
            <person name="Schmutz J."/>
            <person name="Larimer F."/>
            <person name="Land M."/>
            <person name="Hauser L."/>
            <person name="Kyrpides N."/>
            <person name="Kim E."/>
            <person name="Magnuson T."/>
            <person name="Richardson P."/>
        </authorList>
    </citation>
    <scope>NUCLEOTIDE SEQUENCE [LARGE SCALE GENOMIC DNA]</scope>
    <source>
        <strain>JF-5</strain>
    </source>
</reference>
<gene>
    <name evidence="1" type="primary">nuoK</name>
    <name type="ordered locus">Acry_1111</name>
</gene>
<feature type="chain" id="PRO_0000389905" description="NADH-quinone oxidoreductase subunit K">
    <location>
        <begin position="1"/>
        <end position="102"/>
    </location>
</feature>
<feature type="transmembrane region" description="Helical" evidence="1">
    <location>
        <begin position="6"/>
        <end position="26"/>
    </location>
</feature>
<feature type="transmembrane region" description="Helical" evidence="1">
    <location>
        <begin position="30"/>
        <end position="50"/>
    </location>
</feature>
<feature type="transmembrane region" description="Helical" evidence="1">
    <location>
        <begin position="64"/>
        <end position="84"/>
    </location>
</feature>
<name>NUOK_ACICJ</name>
<evidence type="ECO:0000255" key="1">
    <source>
        <dbReference type="HAMAP-Rule" id="MF_01456"/>
    </source>
</evidence>
<organism>
    <name type="scientific">Acidiphilium cryptum (strain JF-5)</name>
    <dbReference type="NCBI Taxonomy" id="349163"/>
    <lineage>
        <taxon>Bacteria</taxon>
        <taxon>Pseudomonadati</taxon>
        <taxon>Pseudomonadota</taxon>
        <taxon>Alphaproteobacteria</taxon>
        <taxon>Acetobacterales</taxon>
        <taxon>Acidocellaceae</taxon>
        <taxon>Acidiphilium</taxon>
    </lineage>
</organism>